<feature type="chain" id="PRO_0000430821" description="Protein root UVB sensitive 4">
    <location>
        <begin position="1"/>
        <end position="520"/>
    </location>
</feature>
<feature type="transmembrane region" description="Helical; Name=1" evidence="1">
    <location>
        <begin position="275"/>
        <end position="295"/>
    </location>
</feature>
<feature type="transmembrane region" description="Helical; Name=2" evidence="1">
    <location>
        <begin position="301"/>
        <end position="321"/>
    </location>
</feature>
<evidence type="ECO:0000255" key="1"/>
<evidence type="ECO:0000303" key="2">
    <source>
    </source>
</evidence>
<evidence type="ECO:0000305" key="3"/>
<evidence type="ECO:0000312" key="4">
    <source>
        <dbReference type="Araport" id="AT2G23470"/>
    </source>
</evidence>
<evidence type="ECO:0000312" key="5">
    <source>
        <dbReference type="EMBL" id="AAC23762.1"/>
    </source>
</evidence>
<evidence type="ECO:0000312" key="6">
    <source>
        <dbReference type="EMBL" id="BAD44143.1"/>
    </source>
</evidence>
<organism evidence="6">
    <name type="scientific">Arabidopsis thaliana</name>
    <name type="common">Mouse-ear cress</name>
    <dbReference type="NCBI Taxonomy" id="3702"/>
    <lineage>
        <taxon>Eukaryota</taxon>
        <taxon>Viridiplantae</taxon>
        <taxon>Streptophyta</taxon>
        <taxon>Embryophyta</taxon>
        <taxon>Tracheophyta</taxon>
        <taxon>Spermatophyta</taxon>
        <taxon>Magnoliopsida</taxon>
        <taxon>eudicotyledons</taxon>
        <taxon>Gunneridae</taxon>
        <taxon>Pentapetalae</taxon>
        <taxon>rosids</taxon>
        <taxon>malvids</taxon>
        <taxon>Brassicales</taxon>
        <taxon>Brassicaceae</taxon>
        <taxon>Camelineae</taxon>
        <taxon>Arabidopsis</taxon>
    </lineage>
</organism>
<sequence length="520" mass="58620">MHSTNQSSRLFQYPCKSTSTQYPIFIFPKFSSRKFVKSLRTSIDYKQEGASKEDLVVPSNVARRLPIIIKKSGKVSRYFIKGDSLELLCVDEEEDDSTSFCLGLDDGFWKLIRLTSSAAKDFFLPKQVSDNYISYVKWKFLHRVFSSALQVLATQAMFRAIGIGQSRSLASSAAFNWILKDGLGRLSRCIYTASLASAFDTNLKRVRFSTSVLFSLSIGVELMTPVFPQYFLLLASIANIAKQISLSCYLATGSAVHRSFAVADNLGEVSAKAQIQTVCFDNLGLLLAVLLNMLFQHNQRLQACLPFVLYPIFSTFDLLGIYQGLKHINLQTLTKDRLEIILERWIEFRQVPSPAEVSEEEGIGLLGSRGSKRVWPIRIGCLDPKAQIPTLSMMAMQSLCSDDGYFITMELSSQGFRRIPKSGIVICLREGANSVDVITSLLQTCYIRKSLGANRTKRSYLSFSDLTLQDWTLLTRESKRAARDDNIALNKQMQEQGWIVKNVLLSAEEQIRYIFDKNQL</sequence>
<comment type="subcellular location">
    <subcellularLocation>
        <location evidence="1">Membrane</location>
        <topology evidence="1">Multi-pass membrane protein</topology>
    </subcellularLocation>
</comment>
<comment type="similarity">
    <text evidence="3">Belongs to the RUS1 family.</text>
</comment>
<comment type="sequence caution" evidence="3">
    <conflict type="erroneous gene model prediction">
        <sequence resource="EMBL-CDS" id="AAC23762"/>
    </conflict>
</comment>
<accession>Q67YT8</accession>
<accession>O80463</accession>
<keyword id="KW-0472">Membrane</keyword>
<keyword id="KW-1185">Reference proteome</keyword>
<keyword id="KW-0812">Transmembrane</keyword>
<keyword id="KW-1133">Transmembrane helix</keyword>
<proteinExistence type="evidence at transcript level"/>
<reference key="1">
    <citation type="journal article" date="1999" name="Nature">
        <title>Sequence and analysis of chromosome 2 of the plant Arabidopsis thaliana.</title>
        <authorList>
            <person name="Lin X."/>
            <person name="Kaul S."/>
            <person name="Rounsley S.D."/>
            <person name="Shea T.P."/>
            <person name="Benito M.-I."/>
            <person name="Town C.D."/>
            <person name="Fujii C.Y."/>
            <person name="Mason T.M."/>
            <person name="Bowman C.L."/>
            <person name="Barnstead M.E."/>
            <person name="Feldblyum T.V."/>
            <person name="Buell C.R."/>
            <person name="Ketchum K.A."/>
            <person name="Lee J.J."/>
            <person name="Ronning C.M."/>
            <person name="Koo H.L."/>
            <person name="Moffat K.S."/>
            <person name="Cronin L.A."/>
            <person name="Shen M."/>
            <person name="Pai G."/>
            <person name="Van Aken S."/>
            <person name="Umayam L."/>
            <person name="Tallon L.J."/>
            <person name="Gill J.E."/>
            <person name="Adams M.D."/>
            <person name="Carrera A.J."/>
            <person name="Creasy T.H."/>
            <person name="Goodman H.M."/>
            <person name="Somerville C.R."/>
            <person name="Copenhaver G.P."/>
            <person name="Preuss D."/>
            <person name="Nierman W.C."/>
            <person name="White O."/>
            <person name="Eisen J.A."/>
            <person name="Salzberg S.L."/>
            <person name="Fraser C.M."/>
            <person name="Venter J.C."/>
        </authorList>
    </citation>
    <scope>NUCLEOTIDE SEQUENCE [LARGE SCALE GENOMIC DNA]</scope>
    <source>
        <strain>cv. Columbia</strain>
    </source>
</reference>
<reference key="2">
    <citation type="journal article" date="2017" name="Plant J.">
        <title>Araport11: a complete reannotation of the Arabidopsis thaliana reference genome.</title>
        <authorList>
            <person name="Cheng C.Y."/>
            <person name="Krishnakumar V."/>
            <person name="Chan A.P."/>
            <person name="Thibaud-Nissen F."/>
            <person name="Schobel S."/>
            <person name="Town C.D."/>
        </authorList>
    </citation>
    <scope>GENOME REANNOTATION</scope>
    <source>
        <strain>cv. Columbia</strain>
    </source>
</reference>
<reference key="3">
    <citation type="submission" date="2004-09" db="EMBL/GenBank/DDBJ databases">
        <title>Large-scale analysis of RIKEN Arabidopsis full-length (RAFL) cDNAs.</title>
        <authorList>
            <person name="Totoki Y."/>
            <person name="Seki M."/>
            <person name="Ishida J."/>
            <person name="Nakajima M."/>
            <person name="Enju A."/>
            <person name="Kamiya A."/>
            <person name="Narusaka M."/>
            <person name="Shin-i T."/>
            <person name="Nakagawa M."/>
            <person name="Sakamoto N."/>
            <person name="Oishi K."/>
            <person name="Kohara Y."/>
            <person name="Kobayashi M."/>
            <person name="Toyoda A."/>
            <person name="Sakaki Y."/>
            <person name="Sakurai T."/>
            <person name="Iida K."/>
            <person name="Akiyama K."/>
            <person name="Satou M."/>
            <person name="Toyoda T."/>
            <person name="Konagaya A."/>
            <person name="Carninci P."/>
            <person name="Kawai J."/>
            <person name="Hayashizaki Y."/>
            <person name="Shinozaki K."/>
        </authorList>
    </citation>
    <scope>NUCLEOTIDE SEQUENCE [LARGE SCALE MRNA]</scope>
    <source>
        <strain>cv. Columbia</strain>
    </source>
</reference>
<reference key="4">
    <citation type="journal article" date="2009" name="Plant Physiol.">
        <title>ROOT UV-B SENSITIVE2 acts with ROOT UV-B SENSITIVE1 in a root ultraviolet B-sensing pathway.</title>
        <authorList>
            <person name="Leasure C.D."/>
            <person name="Tong H."/>
            <person name="Yuen G."/>
            <person name="Hou X."/>
            <person name="Sun X."/>
            <person name="He Z.H."/>
        </authorList>
    </citation>
    <scope>GENE FAMILY</scope>
    <scope>NOMENCLATURE</scope>
    <source>
        <strain>cv. Columbia</strain>
    </source>
</reference>
<dbReference type="EMBL" id="AC003040">
    <property type="protein sequence ID" value="AAC23762.1"/>
    <property type="status" value="ALT_SEQ"/>
    <property type="molecule type" value="Genomic_DNA"/>
</dbReference>
<dbReference type="EMBL" id="CP002685">
    <property type="protein sequence ID" value="AEC07459.1"/>
    <property type="molecule type" value="Genomic_DNA"/>
</dbReference>
<dbReference type="EMBL" id="AK176380">
    <property type="protein sequence ID" value="BAD44143.1"/>
    <property type="molecule type" value="mRNA"/>
</dbReference>
<dbReference type="PIR" id="T01136">
    <property type="entry name" value="T01136"/>
</dbReference>
<dbReference type="RefSeq" id="NP_179928.2">
    <property type="nucleotide sequence ID" value="NM_127911.4"/>
</dbReference>
<dbReference type="FunCoup" id="Q67YT8">
    <property type="interactions" value="79"/>
</dbReference>
<dbReference type="STRING" id="3702.Q67YT8"/>
<dbReference type="PaxDb" id="3702-AT2G23470.1"/>
<dbReference type="EnsemblPlants" id="AT2G23470.1">
    <property type="protein sequence ID" value="AT2G23470.1"/>
    <property type="gene ID" value="AT2G23470"/>
</dbReference>
<dbReference type="GeneID" id="816879"/>
<dbReference type="Gramene" id="AT2G23470.1">
    <property type="protein sequence ID" value="AT2G23470.1"/>
    <property type="gene ID" value="AT2G23470"/>
</dbReference>
<dbReference type="KEGG" id="ath:AT2G23470"/>
<dbReference type="Araport" id="AT2G23470"/>
<dbReference type="TAIR" id="AT2G23470">
    <property type="gene designation" value="RUS4"/>
</dbReference>
<dbReference type="eggNOG" id="KOG4249">
    <property type="taxonomic scope" value="Eukaryota"/>
</dbReference>
<dbReference type="HOGENOM" id="CLU_015325_1_0_1"/>
<dbReference type="InParanoid" id="Q67YT8"/>
<dbReference type="OMA" id="QACYVRK"/>
<dbReference type="PhylomeDB" id="Q67YT8"/>
<dbReference type="PRO" id="PR:Q67YT8"/>
<dbReference type="Proteomes" id="UP000006548">
    <property type="component" value="Chromosome 2"/>
</dbReference>
<dbReference type="ExpressionAtlas" id="Q67YT8">
    <property type="expression patterns" value="baseline and differential"/>
</dbReference>
<dbReference type="GO" id="GO:0009507">
    <property type="term" value="C:chloroplast"/>
    <property type="evidence" value="ECO:0000314"/>
    <property type="project" value="TAIR"/>
</dbReference>
<dbReference type="GO" id="GO:0016020">
    <property type="term" value="C:membrane"/>
    <property type="evidence" value="ECO:0007669"/>
    <property type="project" value="UniProtKB-SubCell"/>
</dbReference>
<dbReference type="GO" id="GO:0048653">
    <property type="term" value="P:anther development"/>
    <property type="evidence" value="ECO:0000315"/>
    <property type="project" value="TAIR"/>
</dbReference>
<dbReference type="InterPro" id="IPR006968">
    <property type="entry name" value="RUS_fam"/>
</dbReference>
<dbReference type="InterPro" id="IPR055412">
    <property type="entry name" value="UVB_sens_C"/>
</dbReference>
<dbReference type="InterPro" id="IPR054549">
    <property type="entry name" value="UVB_sens_RUS_dom"/>
</dbReference>
<dbReference type="PANTHER" id="PTHR12770:SF29">
    <property type="entry name" value="PROTEIN ROOT UVB SENSITIVE 4"/>
    <property type="match status" value="1"/>
</dbReference>
<dbReference type="PANTHER" id="PTHR12770">
    <property type="entry name" value="RUS1 FAMILY PROTEIN C16ORF58"/>
    <property type="match status" value="1"/>
</dbReference>
<dbReference type="Pfam" id="PF24160">
    <property type="entry name" value="UVB_sens_C"/>
    <property type="match status" value="1"/>
</dbReference>
<dbReference type="Pfam" id="PF04884">
    <property type="entry name" value="UVB_sens_prot"/>
    <property type="match status" value="1"/>
</dbReference>
<protein>
    <recommendedName>
        <fullName evidence="2">Protein root UVB sensitive 4</fullName>
    </recommendedName>
</protein>
<name>RUS4_ARATH</name>
<gene>
    <name evidence="2" type="primary">RUS4</name>
    <name evidence="4" type="ordered locus">At2g23470</name>
    <name evidence="5" type="ORF">F26B6.12</name>
</gene>